<protein>
    <recommendedName>
        <fullName evidence="1">Photosystem II reaction center protein Z</fullName>
        <shortName evidence="1">PSII-Z</shortName>
    </recommendedName>
</protein>
<organism>
    <name type="scientific">Nostoc punctiforme (strain ATCC 29133 / PCC 73102)</name>
    <dbReference type="NCBI Taxonomy" id="63737"/>
    <lineage>
        <taxon>Bacteria</taxon>
        <taxon>Bacillati</taxon>
        <taxon>Cyanobacteriota</taxon>
        <taxon>Cyanophyceae</taxon>
        <taxon>Nostocales</taxon>
        <taxon>Nostocaceae</taxon>
        <taxon>Nostoc</taxon>
    </lineage>
</organism>
<keyword id="KW-0472">Membrane</keyword>
<keyword id="KW-0602">Photosynthesis</keyword>
<keyword id="KW-0604">Photosystem II</keyword>
<keyword id="KW-0674">Reaction center</keyword>
<keyword id="KW-1185">Reference proteome</keyword>
<keyword id="KW-0793">Thylakoid</keyword>
<keyword id="KW-0812">Transmembrane</keyword>
<keyword id="KW-1133">Transmembrane helix</keyword>
<reference key="1">
    <citation type="journal article" date="2013" name="Plant Physiol.">
        <title>A Nostoc punctiforme Sugar Transporter Necessary to Establish a Cyanobacterium-Plant Symbiosis.</title>
        <authorList>
            <person name="Ekman M."/>
            <person name="Picossi S."/>
            <person name="Campbell E.L."/>
            <person name="Meeks J.C."/>
            <person name="Flores E."/>
        </authorList>
    </citation>
    <scope>NUCLEOTIDE SEQUENCE [LARGE SCALE GENOMIC DNA]</scope>
    <source>
        <strain>ATCC 29133 / PCC 73102</strain>
    </source>
</reference>
<sequence length="62" mass="6851">MTIIFQFALIGLVLLSFVLVVGVPVAYATPQNWVESKKLLWVGSAVWIALVFLVGLLNFFVV</sequence>
<dbReference type="EMBL" id="CP001037">
    <property type="protein sequence ID" value="ACC79069.1"/>
    <property type="molecule type" value="Genomic_DNA"/>
</dbReference>
<dbReference type="RefSeq" id="WP_012407095.1">
    <property type="nucleotide sequence ID" value="NC_010628.1"/>
</dbReference>
<dbReference type="SMR" id="B2J4U7"/>
<dbReference type="STRING" id="63737.Npun_R0284"/>
<dbReference type="EnsemblBacteria" id="ACC79069">
    <property type="protein sequence ID" value="ACC79069"/>
    <property type="gene ID" value="Npun_R0284"/>
</dbReference>
<dbReference type="KEGG" id="npu:Npun_R0284"/>
<dbReference type="eggNOG" id="ENOG5032ZB0">
    <property type="taxonomic scope" value="Bacteria"/>
</dbReference>
<dbReference type="HOGENOM" id="CLU_195286_1_0_3"/>
<dbReference type="PhylomeDB" id="B2J4U7"/>
<dbReference type="Proteomes" id="UP000001191">
    <property type="component" value="Chromosome"/>
</dbReference>
<dbReference type="GO" id="GO:0009539">
    <property type="term" value="C:photosystem II reaction center"/>
    <property type="evidence" value="ECO:0007669"/>
    <property type="project" value="InterPro"/>
</dbReference>
<dbReference type="GO" id="GO:0031676">
    <property type="term" value="C:plasma membrane-derived thylakoid membrane"/>
    <property type="evidence" value="ECO:0007669"/>
    <property type="project" value="UniProtKB-SubCell"/>
</dbReference>
<dbReference type="GO" id="GO:0015979">
    <property type="term" value="P:photosynthesis"/>
    <property type="evidence" value="ECO:0007669"/>
    <property type="project" value="UniProtKB-UniRule"/>
</dbReference>
<dbReference type="GO" id="GO:0042549">
    <property type="term" value="P:photosystem II stabilization"/>
    <property type="evidence" value="ECO:0007669"/>
    <property type="project" value="InterPro"/>
</dbReference>
<dbReference type="Gene3D" id="1.10.287.740">
    <property type="entry name" value="Photosystem II PsbZ, reaction centre"/>
    <property type="match status" value="1"/>
</dbReference>
<dbReference type="HAMAP" id="MF_00644">
    <property type="entry name" value="PSII_PsbZ"/>
    <property type="match status" value="1"/>
</dbReference>
<dbReference type="InterPro" id="IPR002644">
    <property type="entry name" value="PSII_PsbZ"/>
</dbReference>
<dbReference type="InterPro" id="IPR036512">
    <property type="entry name" value="PSII_PsbZ_sf"/>
</dbReference>
<dbReference type="NCBIfam" id="TIGR03043">
    <property type="entry name" value="PS_II_psbZ"/>
    <property type="match status" value="1"/>
</dbReference>
<dbReference type="PANTHER" id="PTHR34971">
    <property type="entry name" value="PHOTOSYSTEM II REACTION CENTER PROTEIN Z"/>
    <property type="match status" value="1"/>
</dbReference>
<dbReference type="PANTHER" id="PTHR34971:SF2">
    <property type="entry name" value="PHOTOSYSTEM II REACTION CENTER PROTEIN Z"/>
    <property type="match status" value="1"/>
</dbReference>
<dbReference type="Pfam" id="PF01737">
    <property type="entry name" value="Ycf9"/>
    <property type="match status" value="1"/>
</dbReference>
<dbReference type="SUPFAM" id="SSF161055">
    <property type="entry name" value="PsbZ-like"/>
    <property type="match status" value="1"/>
</dbReference>
<name>PSBZ_NOSP7</name>
<gene>
    <name evidence="1" type="primary">psbZ</name>
    <name type="ordered locus">Npun_R0284</name>
</gene>
<feature type="chain" id="PRO_1000130910" description="Photosystem II reaction center protein Z">
    <location>
        <begin position="1"/>
        <end position="62"/>
    </location>
</feature>
<feature type="transmembrane region" description="Helical" evidence="1">
    <location>
        <begin position="8"/>
        <end position="28"/>
    </location>
</feature>
<feature type="transmembrane region" description="Helical" evidence="1">
    <location>
        <begin position="41"/>
        <end position="61"/>
    </location>
</feature>
<comment type="function">
    <text evidence="1">May control the interaction of photosystem II (PSII) cores with the light-harvesting antenna, regulates electron flow through the 2 photosystem reaction centers. PSII is a light-driven water plastoquinone oxidoreductase, using light energy to abstract electrons from H(2)O, generating a proton gradient subsequently used for ATP formation.</text>
</comment>
<comment type="subunit">
    <text evidence="1">PSII is composed of 1 copy each of membrane proteins PsbA, PsbB, PsbC, PsbD, PsbE, PsbF, PsbH, PsbI, PsbJ, PsbK, PsbL, PsbM, PsbT, PsbX, PsbY, PsbZ, Psb30/Ycf12, peripheral proteins PsbO, CyanoQ (PsbQ), PsbU, PsbV and a large number of cofactors. It forms dimeric complexes.</text>
</comment>
<comment type="subcellular location">
    <subcellularLocation>
        <location evidence="1">Cellular thylakoid membrane</location>
        <topology evidence="1">Multi-pass membrane protein</topology>
    </subcellularLocation>
</comment>
<comment type="similarity">
    <text evidence="1">Belongs to the PsbZ family.</text>
</comment>
<accession>B2J4U7</accession>
<evidence type="ECO:0000255" key="1">
    <source>
        <dbReference type="HAMAP-Rule" id="MF_00644"/>
    </source>
</evidence>
<proteinExistence type="inferred from homology"/>